<keyword id="KW-0067">ATP-binding</keyword>
<keyword id="KW-0131">Cell cycle</keyword>
<keyword id="KW-0132">Cell division</keyword>
<keyword id="KW-0175">Coiled coil</keyword>
<keyword id="KW-0963">Cytoplasm</keyword>
<keyword id="KW-0206">Cytoskeleton</keyword>
<keyword id="KW-0493">Microtubule</keyword>
<keyword id="KW-0498">Mitosis</keyword>
<keyword id="KW-0505">Motor protein</keyword>
<keyword id="KW-0547">Nucleotide-binding</keyword>
<keyword id="KW-0539">Nucleus</keyword>
<keyword id="KW-1185">Reference proteome</keyword>
<accession>Q5ZLK6</accession>
<dbReference type="EMBL" id="AJ719728">
    <property type="protein sequence ID" value="CAG31387.1"/>
    <property type="molecule type" value="mRNA"/>
</dbReference>
<dbReference type="RefSeq" id="NP_001026099.1">
    <property type="nucleotide sequence ID" value="NM_001030928.1"/>
</dbReference>
<dbReference type="SMR" id="Q5ZLK6"/>
<dbReference type="FunCoup" id="Q5ZLK6">
    <property type="interactions" value="378"/>
</dbReference>
<dbReference type="STRING" id="9031.ENSGALP00000055265"/>
<dbReference type="GlyGen" id="Q5ZLK6">
    <property type="glycosylation" value="1 site"/>
</dbReference>
<dbReference type="PaxDb" id="9031-ENSGALP00000001290"/>
<dbReference type="GeneID" id="419968"/>
<dbReference type="KEGG" id="gga:419968"/>
<dbReference type="CTD" id="146909"/>
<dbReference type="VEuPathDB" id="HostDB:geneid_419968"/>
<dbReference type="eggNOG" id="KOG0242">
    <property type="taxonomic scope" value="Eukaryota"/>
</dbReference>
<dbReference type="HOGENOM" id="CLU_001485_21_5_1"/>
<dbReference type="InParanoid" id="Q5ZLK6"/>
<dbReference type="OMA" id="HQEEKRF"/>
<dbReference type="OrthoDB" id="3176171at2759"/>
<dbReference type="PhylomeDB" id="Q5ZLK6"/>
<dbReference type="TreeFam" id="TF105231"/>
<dbReference type="Reactome" id="R-GGA-6811434">
    <property type="pathway name" value="COPI-dependent Golgi-to-ER retrograde traffic"/>
</dbReference>
<dbReference type="Reactome" id="R-GGA-983189">
    <property type="pathway name" value="Kinesins"/>
</dbReference>
<dbReference type="PRO" id="PR:Q5ZLK6"/>
<dbReference type="Proteomes" id="UP000000539">
    <property type="component" value="Chromosome 27"/>
</dbReference>
<dbReference type="Bgee" id="ENSGALG00000031553">
    <property type="expression patterns" value="Expressed in testis and 5 other cell types or tissues"/>
</dbReference>
<dbReference type="GO" id="GO:0005737">
    <property type="term" value="C:cytoplasm"/>
    <property type="evidence" value="ECO:0000318"/>
    <property type="project" value="GO_Central"/>
</dbReference>
<dbReference type="GO" id="GO:0005871">
    <property type="term" value="C:kinesin complex"/>
    <property type="evidence" value="ECO:0000318"/>
    <property type="project" value="GO_Central"/>
</dbReference>
<dbReference type="GO" id="GO:0061673">
    <property type="term" value="C:mitotic spindle astral microtubule"/>
    <property type="evidence" value="ECO:0000318"/>
    <property type="project" value="GO_Central"/>
</dbReference>
<dbReference type="GO" id="GO:1990023">
    <property type="term" value="C:mitotic spindle midzone"/>
    <property type="evidence" value="ECO:0000318"/>
    <property type="project" value="GO_Central"/>
</dbReference>
<dbReference type="GO" id="GO:0005634">
    <property type="term" value="C:nucleus"/>
    <property type="evidence" value="ECO:0000318"/>
    <property type="project" value="GO_Central"/>
</dbReference>
<dbReference type="GO" id="GO:0005524">
    <property type="term" value="F:ATP binding"/>
    <property type="evidence" value="ECO:0007669"/>
    <property type="project" value="UniProtKB-KW"/>
</dbReference>
<dbReference type="GO" id="GO:0016887">
    <property type="term" value="F:ATP hydrolysis activity"/>
    <property type="evidence" value="ECO:0000318"/>
    <property type="project" value="GO_Central"/>
</dbReference>
<dbReference type="GO" id="GO:0008017">
    <property type="term" value="F:microtubule binding"/>
    <property type="evidence" value="ECO:0000318"/>
    <property type="project" value="GO_Central"/>
</dbReference>
<dbReference type="GO" id="GO:0008574">
    <property type="term" value="F:plus-end-directed microtubule motor activity"/>
    <property type="evidence" value="ECO:0000318"/>
    <property type="project" value="GO_Central"/>
</dbReference>
<dbReference type="GO" id="GO:0051301">
    <property type="term" value="P:cell division"/>
    <property type="evidence" value="ECO:0007669"/>
    <property type="project" value="UniProtKB-KW"/>
</dbReference>
<dbReference type="GO" id="GO:0007019">
    <property type="term" value="P:microtubule depolymerization"/>
    <property type="evidence" value="ECO:0000318"/>
    <property type="project" value="GO_Central"/>
</dbReference>
<dbReference type="GO" id="GO:0007018">
    <property type="term" value="P:microtubule-based movement"/>
    <property type="evidence" value="ECO:0000318"/>
    <property type="project" value="GO_Central"/>
</dbReference>
<dbReference type="GO" id="GO:0000070">
    <property type="term" value="P:mitotic sister chromatid segregation"/>
    <property type="evidence" value="ECO:0000318"/>
    <property type="project" value="GO_Central"/>
</dbReference>
<dbReference type="CDD" id="cd01370">
    <property type="entry name" value="KISc_KIP3_like"/>
    <property type="match status" value="1"/>
</dbReference>
<dbReference type="FunFam" id="3.40.850.10:FF:000027">
    <property type="entry name" value="Kinesin-like protein"/>
    <property type="match status" value="1"/>
</dbReference>
<dbReference type="Gene3D" id="3.40.850.10">
    <property type="entry name" value="Kinesin motor domain"/>
    <property type="match status" value="1"/>
</dbReference>
<dbReference type="InterPro" id="IPR027640">
    <property type="entry name" value="Kinesin-like_fam"/>
</dbReference>
<dbReference type="InterPro" id="IPR019821">
    <property type="entry name" value="Kinesin_motor_CS"/>
</dbReference>
<dbReference type="InterPro" id="IPR001752">
    <property type="entry name" value="Kinesin_motor_dom"/>
</dbReference>
<dbReference type="InterPro" id="IPR036961">
    <property type="entry name" value="Kinesin_motor_dom_sf"/>
</dbReference>
<dbReference type="InterPro" id="IPR027417">
    <property type="entry name" value="P-loop_NTPase"/>
</dbReference>
<dbReference type="PANTHER" id="PTHR47968">
    <property type="entry name" value="CENTROMERE PROTEIN E"/>
    <property type="match status" value="1"/>
</dbReference>
<dbReference type="PANTHER" id="PTHR47968:SF71">
    <property type="entry name" value="KINESIN-LIKE PROTEIN"/>
    <property type="match status" value="1"/>
</dbReference>
<dbReference type="Pfam" id="PF00225">
    <property type="entry name" value="Kinesin"/>
    <property type="match status" value="1"/>
</dbReference>
<dbReference type="PRINTS" id="PR00380">
    <property type="entry name" value="KINESINHEAVY"/>
</dbReference>
<dbReference type="SMART" id="SM00129">
    <property type="entry name" value="KISc"/>
    <property type="match status" value="1"/>
</dbReference>
<dbReference type="SUPFAM" id="SSF52540">
    <property type="entry name" value="P-loop containing nucleoside triphosphate hydrolases"/>
    <property type="match status" value="1"/>
</dbReference>
<dbReference type="PROSITE" id="PS00411">
    <property type="entry name" value="KINESIN_MOTOR_1"/>
    <property type="match status" value="1"/>
</dbReference>
<dbReference type="PROSITE" id="PS50067">
    <property type="entry name" value="KINESIN_MOTOR_2"/>
    <property type="match status" value="1"/>
</dbReference>
<proteinExistence type="evidence at transcript level"/>
<protein>
    <recommendedName>
        <fullName>Kinesin-like protein KIF18B</fullName>
    </recommendedName>
</protein>
<evidence type="ECO:0000250" key="1"/>
<evidence type="ECO:0000255" key="2"/>
<evidence type="ECO:0000255" key="3">
    <source>
        <dbReference type="PROSITE-ProRule" id="PRU00283"/>
    </source>
</evidence>
<evidence type="ECO:0000256" key="4">
    <source>
        <dbReference type="SAM" id="MobiDB-lite"/>
    </source>
</evidence>
<evidence type="ECO:0000305" key="5"/>
<reference key="1">
    <citation type="journal article" date="2005" name="Genome Biol.">
        <title>Full-length cDNAs from chicken bursal lymphocytes to facilitate gene function analysis.</title>
        <authorList>
            <person name="Caldwell R.B."/>
            <person name="Kierzek A.M."/>
            <person name="Arakawa H."/>
            <person name="Bezzubov Y."/>
            <person name="Zaim J."/>
            <person name="Fiedler P."/>
            <person name="Kutter S."/>
            <person name="Blagodatski A."/>
            <person name="Kostovska D."/>
            <person name="Koter M."/>
            <person name="Plachy J."/>
            <person name="Carninci P."/>
            <person name="Hayashizaki Y."/>
            <person name="Buerstedde J.-M."/>
        </authorList>
    </citation>
    <scope>NUCLEOTIDE SEQUENCE [LARGE SCALE MRNA]</scope>
    <source>
        <strain>CB</strain>
        <tissue>Bursa of Fabricius</tissue>
    </source>
</reference>
<sequence>MAMGPPPEDGTVAVVVRVRPPTPSERDGAAHPVLHVVDQHILVFDPEEPGGPPGAALPPRGPKHRGKDLKFVFDRVFGEGATQEEVFQHTTREVLDGVLNGYNCSVFAYGATGAGKTYTMLGSEQSPGIMYLTMAELYRRIEARRDEKSCEVLVSYQEVYNEQIHDLLEPKGPLAIREDPEKGVVVQGLSFHQPKSAEQLLEMLANGNKNRTQHPTDANATSSRSHAVFQIYVKQQDRVVGLSQDLQVAKMSLIDLAGSERASVTNTKGERLREGANINRSLLALINVINALADAKSKKTHIPYRDSKLTRLLKDSIGGNCRTIMIAAVSPSSLAYEDTYNTLKYANRAKEIKLSLKSNVLSLDCHISKYATICEQLKTEVADLQAKLRAYEDAARDAGKQIPALLPPPRMEEAVPESCSAPNVCRESDGEQQELGAGQDAQLGGEEEVLEEMPPSSPSPTQQTDLQLGMKKPNRLPQRLSRSHTEMLMATILSVAQKQYSLLKAANLLTPDMVSEFEELQLLVQKEAAVSPQPTDTSGAPPALRTQRGCDASPSTLSAEPSVPTTRAALRRLQQLTALSSPKLVAKKRRRSEMSNTSRLETPHSLNTRAKRQRKSSPLSAGGEVEAQRSPHTPCLKEPQSPPLLPCCTPKICPLTVTKRRAPLMTSAAQNCCTPTVCDLNVTYSLSEDVAKPGALSLPRFPGWENAPCALKKQEGPFVPRASIPVFSMKGSSIPKPSSISKGSVQKRRGAVSNASRSLGGIQSHITSSSSRRSAQPQSIPEHPPPGLTWKGRSGPR</sequence>
<organism>
    <name type="scientific">Gallus gallus</name>
    <name type="common">Chicken</name>
    <dbReference type="NCBI Taxonomy" id="9031"/>
    <lineage>
        <taxon>Eukaryota</taxon>
        <taxon>Metazoa</taxon>
        <taxon>Chordata</taxon>
        <taxon>Craniata</taxon>
        <taxon>Vertebrata</taxon>
        <taxon>Euteleostomi</taxon>
        <taxon>Archelosauria</taxon>
        <taxon>Archosauria</taxon>
        <taxon>Dinosauria</taxon>
        <taxon>Saurischia</taxon>
        <taxon>Theropoda</taxon>
        <taxon>Coelurosauria</taxon>
        <taxon>Aves</taxon>
        <taxon>Neognathae</taxon>
        <taxon>Galloanserae</taxon>
        <taxon>Galliformes</taxon>
        <taxon>Phasianidae</taxon>
        <taxon>Phasianinae</taxon>
        <taxon>Gallus</taxon>
    </lineage>
</organism>
<comment type="function">
    <text evidence="1">May play an important role in microtubule plus-end depolymerizing activity in mitotic cells.</text>
</comment>
<comment type="subcellular location">
    <subcellularLocation>
        <location evidence="1">Nucleus</location>
    </subcellularLocation>
    <subcellularLocation>
        <location evidence="1">Cytoplasm</location>
    </subcellularLocation>
    <subcellularLocation>
        <location evidence="5">Cytoplasm</location>
        <location evidence="5">Cytoskeleton</location>
    </subcellularLocation>
</comment>
<comment type="similarity">
    <text evidence="3">Belongs to the TRAFAC class myosin-kinesin ATPase superfamily. Kinesin family.</text>
</comment>
<name>KI18B_CHICK</name>
<feature type="chain" id="PRO_0000318972" description="Kinesin-like protein KIF18B">
    <location>
        <begin position="1"/>
        <end position="797"/>
    </location>
</feature>
<feature type="domain" description="Kinesin motor" evidence="3">
    <location>
        <begin position="11"/>
        <end position="352"/>
    </location>
</feature>
<feature type="region of interest" description="Disordered" evidence="4">
    <location>
        <begin position="412"/>
        <end position="476"/>
    </location>
</feature>
<feature type="region of interest" description="Disordered" evidence="4">
    <location>
        <begin position="528"/>
        <end position="564"/>
    </location>
</feature>
<feature type="region of interest" description="Disordered" evidence="4">
    <location>
        <begin position="579"/>
        <end position="640"/>
    </location>
</feature>
<feature type="region of interest" description="Disordered" evidence="4">
    <location>
        <begin position="730"/>
        <end position="797"/>
    </location>
</feature>
<feature type="coiled-coil region" evidence="2">
    <location>
        <begin position="367"/>
        <end position="402"/>
    </location>
</feature>
<feature type="compositionally biased region" description="Polar residues" evidence="4">
    <location>
        <begin position="594"/>
        <end position="608"/>
    </location>
</feature>
<feature type="compositionally biased region" description="Low complexity" evidence="4">
    <location>
        <begin position="731"/>
        <end position="744"/>
    </location>
</feature>
<feature type="binding site" evidence="3">
    <location>
        <begin position="110"/>
        <end position="117"/>
    </location>
    <ligand>
        <name>ATP</name>
        <dbReference type="ChEBI" id="CHEBI:30616"/>
    </ligand>
</feature>
<gene>
    <name type="primary">KIF18B</name>
    <name type="ORF">RCJMB04_5l15</name>
</gene>